<proteinExistence type="evidence at protein level"/>
<sequence length="54" mass="5897">AEDRSSLSGVSDAEAKEFHALFVSSFTAFIVIAVLAHVLAWAWRPWIPGPKGWA</sequence>
<protein>
    <recommendedName>
        <fullName>Light-harvesting protein B-880 beta chain</fullName>
    </recommendedName>
    <alternativeName>
        <fullName>Antenna pigment protein beta chain</fullName>
    </alternativeName>
</protein>
<keyword id="KW-0042">Antenna complex</keyword>
<keyword id="KW-0076">Bacteriochlorophyll</keyword>
<keyword id="KW-0997">Cell inner membrane</keyword>
<keyword id="KW-1003">Cell membrane</keyword>
<keyword id="KW-0148">Chlorophyll</keyword>
<keyword id="KW-0157">Chromophore</keyword>
<keyword id="KW-0903">Direct protein sequencing</keyword>
<keyword id="KW-0437">Light-harvesting polypeptide</keyword>
<keyword id="KW-0460">Magnesium</keyword>
<keyword id="KW-0472">Membrane</keyword>
<keyword id="KW-0479">Metal-binding</keyword>
<keyword id="KW-0812">Transmembrane</keyword>
<keyword id="KW-1133">Transmembrane helix</keyword>
<name>LHB7_RHOAC</name>
<reference key="1">
    <citation type="journal article" date="1992" name="Eur. J. Biochem.">
        <title>The primary structure of the antenna polypeptides of Ectothiorhodospira halochloris and Ectothiorhodospira halophila. Four core-type antenna polypeptides in E. halochloris and E. halophila.</title>
        <authorList>
            <person name="Wagner-Huber R."/>
            <person name="Brunisholz R.A."/>
            <person name="Bissig I."/>
            <person name="Frank G."/>
            <person name="Suter F."/>
            <person name="Zuber H."/>
        </authorList>
    </citation>
    <scope>PROTEIN SEQUENCE</scope>
    <source>
        <strain>DSM 141 / 7750 / LMG 4302</strain>
    </source>
</reference>
<evidence type="ECO:0000255" key="1"/>
<evidence type="ECO:0000305" key="2"/>
<organism>
    <name type="scientific">Rhodoblastus acidophilus</name>
    <name type="common">Rhodopseudomonas acidophila</name>
    <dbReference type="NCBI Taxonomy" id="1074"/>
    <lineage>
        <taxon>Bacteria</taxon>
        <taxon>Pseudomonadati</taxon>
        <taxon>Pseudomonadota</taxon>
        <taxon>Alphaproteobacteria</taxon>
        <taxon>Hyphomicrobiales</taxon>
        <taxon>Rhodoblastaceae</taxon>
        <taxon>Rhodoblastus</taxon>
    </lineage>
</organism>
<accession>P35099</accession>
<feature type="chain" id="PRO_0000099821" description="Light-harvesting protein B-880 beta chain">
    <location>
        <begin position="1"/>
        <end position="54"/>
    </location>
</feature>
<feature type="topological domain" description="Cytoplasmic" evidence="1">
    <location>
        <begin position="1"/>
        <end position="20"/>
    </location>
</feature>
<feature type="transmembrane region" description="Helical" evidence="1">
    <location>
        <begin position="21"/>
        <end position="43"/>
    </location>
</feature>
<feature type="topological domain" description="Periplasmic" evidence="1">
    <location>
        <begin position="44"/>
        <end position="54"/>
    </location>
</feature>
<feature type="binding site" description="axial binding residue" evidence="1">
    <location>
        <position position="19"/>
    </location>
    <ligand>
        <name>a bacteriochlorophyll</name>
        <dbReference type="ChEBI" id="CHEBI:38201"/>
    </ligand>
    <ligandPart>
        <name>Mg</name>
        <dbReference type="ChEBI" id="CHEBI:25107"/>
    </ligandPart>
</feature>
<feature type="binding site" description="axial binding residue" evidence="1">
    <location>
        <position position="37"/>
    </location>
    <ligand>
        <name>a bacteriochlorophyll</name>
        <dbReference type="ChEBI" id="CHEBI:38201"/>
    </ligand>
    <ligandPart>
        <name>Mg</name>
        <dbReference type="ChEBI" id="CHEBI:25107"/>
    </ligandPart>
</feature>
<dbReference type="SMR" id="P35099"/>
<dbReference type="GO" id="GO:0005886">
    <property type="term" value="C:plasma membrane"/>
    <property type="evidence" value="ECO:0007669"/>
    <property type="project" value="UniProtKB-SubCell"/>
</dbReference>
<dbReference type="GO" id="GO:0030077">
    <property type="term" value="C:plasma membrane light-harvesting complex"/>
    <property type="evidence" value="ECO:0007669"/>
    <property type="project" value="InterPro"/>
</dbReference>
<dbReference type="GO" id="GO:0042314">
    <property type="term" value="F:bacteriochlorophyll binding"/>
    <property type="evidence" value="ECO:0007669"/>
    <property type="project" value="UniProtKB-KW"/>
</dbReference>
<dbReference type="GO" id="GO:0045156">
    <property type="term" value="F:electron transporter, transferring electrons within the cyclic electron transport pathway of photosynthesis activity"/>
    <property type="evidence" value="ECO:0007669"/>
    <property type="project" value="InterPro"/>
</dbReference>
<dbReference type="GO" id="GO:0046872">
    <property type="term" value="F:metal ion binding"/>
    <property type="evidence" value="ECO:0007669"/>
    <property type="project" value="UniProtKB-KW"/>
</dbReference>
<dbReference type="GO" id="GO:0019684">
    <property type="term" value="P:photosynthesis, light reaction"/>
    <property type="evidence" value="ECO:0007669"/>
    <property type="project" value="InterPro"/>
</dbReference>
<dbReference type="Gene3D" id="1.20.5.250">
    <property type="match status" value="1"/>
</dbReference>
<dbReference type="InterPro" id="IPR000066">
    <property type="entry name" value="Antenna_a/b"/>
</dbReference>
<dbReference type="InterPro" id="IPR023623">
    <property type="entry name" value="Antenna_beta_CS"/>
</dbReference>
<dbReference type="InterPro" id="IPR023624">
    <property type="entry name" value="Antenna_beta_dom_sf"/>
</dbReference>
<dbReference type="InterPro" id="IPR002362">
    <property type="entry name" value="LHB-1/5"/>
</dbReference>
<dbReference type="InterPro" id="IPR035889">
    <property type="entry name" value="Light-harvesting_complex"/>
</dbReference>
<dbReference type="NCBIfam" id="NF040862">
    <property type="entry name" value="pufB_517_ASD"/>
    <property type="match status" value="1"/>
</dbReference>
<dbReference type="Pfam" id="PF00556">
    <property type="entry name" value="LHC"/>
    <property type="match status" value="1"/>
</dbReference>
<dbReference type="PIRSF" id="PIRSF002900">
    <property type="entry name" value="Antenna_beta"/>
    <property type="match status" value="1"/>
</dbReference>
<dbReference type="PRINTS" id="PR00674">
    <property type="entry name" value="LIGHTHARVSTB"/>
</dbReference>
<dbReference type="SUPFAM" id="SSF56918">
    <property type="entry name" value="Light-harvesting complex subunits"/>
    <property type="match status" value="1"/>
</dbReference>
<dbReference type="PROSITE" id="PS00969">
    <property type="entry name" value="ANTENNA_COMP_BETA"/>
    <property type="match status" value="1"/>
</dbReference>
<comment type="function">
    <text>Antenna complexes are light-harvesting systems, which transfer the excitation energy to the reaction centers.</text>
</comment>
<comment type="subunit">
    <text>The core complex is formed by different alpha and beta chains, binding bacteriochlorophyll molecules, and arranged most probably in tetrameric structures disposed around the reaction center. The non-pigmented gamma chains may constitute additional components.</text>
</comment>
<comment type="subcellular location">
    <subcellularLocation>
        <location>Cell inner membrane</location>
        <topology>Single-pass type II membrane protein</topology>
    </subcellularLocation>
</comment>
<comment type="similarity">
    <text evidence="2">Belongs to the antenna complex beta subunit family.</text>
</comment>